<proteinExistence type="inferred from homology"/>
<accession>C7GKE1</accession>
<protein>
    <recommendedName>
        <fullName evidence="1">Enolase-phosphatase E1</fullName>
        <ecNumber evidence="1">3.1.3.77</ecNumber>
    </recommendedName>
    <alternativeName>
        <fullName evidence="1">2,3-diketo-5-methylthio-1-phosphopentane phosphatase</fullName>
    </alternativeName>
    <alternativeName>
        <fullName evidence="1">Unknown transcript 4 protein</fullName>
    </alternativeName>
</protein>
<name>ENOPH_YEAS2</name>
<keyword id="KW-0028">Amino-acid biosynthesis</keyword>
<keyword id="KW-0963">Cytoplasm</keyword>
<keyword id="KW-0378">Hydrolase</keyword>
<keyword id="KW-0460">Magnesium</keyword>
<keyword id="KW-0479">Metal-binding</keyword>
<keyword id="KW-0486">Methionine biosynthesis</keyword>
<keyword id="KW-0539">Nucleus</keyword>
<sequence>MGDNYSTYLLDIEGTVCPISFVKETLSPYFTKKVPQLVQQDTRDSPVSNILSQFHIDDKEQLQAHILELVAKDVKDPILKQLQGYIWAQGYESGQIKAPVYADAIDFIKRKKRVFIYSSGSVKAQKLLFGYVQDPNAPAHDSLDLNSYIDGYFDINTSGKKTETQSYANILRDIGAKASEVLFLSDNPLELDAAAGVGIATGLASRPGNAPVPDGQKYQVYKDFETL</sequence>
<gene>
    <name evidence="1" type="primary">UTR4</name>
    <name type="ORF">C1Q_00679</name>
</gene>
<comment type="function">
    <text evidence="1">Bifunctional enzyme that catalyzes the enolization of 2,3-diketo-5-methylthiopentyl-1-phosphate (DK-MTP-1-P) into the intermediate 2-hydroxy-3-keto-5-methylthiopentenyl-1-phosphate (HK-MTPenyl-1-P), which is then dephosphorylated to form the acireductone 1,2-dihydroxy-3-keto-5-methylthiopentene (DHK-MTPene).</text>
</comment>
<comment type="catalytic activity">
    <reaction evidence="1">
        <text>5-methylsulfanyl-2,3-dioxopentyl phosphate + H2O = 1,2-dihydroxy-5-(methylsulfanyl)pent-1-en-3-one + phosphate</text>
        <dbReference type="Rhea" id="RHEA:21700"/>
        <dbReference type="ChEBI" id="CHEBI:15377"/>
        <dbReference type="ChEBI" id="CHEBI:43474"/>
        <dbReference type="ChEBI" id="CHEBI:49252"/>
        <dbReference type="ChEBI" id="CHEBI:58828"/>
        <dbReference type="EC" id="3.1.3.77"/>
    </reaction>
</comment>
<comment type="cofactor">
    <cofactor evidence="1">
        <name>Mg(2+)</name>
        <dbReference type="ChEBI" id="CHEBI:18420"/>
    </cofactor>
    <text evidence="1">Binds 1 Mg(2+) ion per subunit.</text>
</comment>
<comment type="pathway">
    <text evidence="1">Amino-acid biosynthesis; L-methionine biosynthesis via salvage pathway; L-methionine from S-methyl-5-thio-alpha-D-ribose 1-phosphate: step 3/6.</text>
</comment>
<comment type="pathway">
    <text evidence="1">Amino-acid biosynthesis; L-methionine biosynthesis via salvage pathway; L-methionine from S-methyl-5-thio-alpha-D-ribose 1-phosphate: step 4/6.</text>
</comment>
<comment type="subunit">
    <text evidence="1">Monomer.</text>
</comment>
<comment type="subcellular location">
    <subcellularLocation>
        <location evidence="1">Cytoplasm</location>
    </subcellularLocation>
    <subcellularLocation>
        <location evidence="1">Nucleus</location>
    </subcellularLocation>
</comment>
<comment type="similarity">
    <text evidence="1">Belongs to the HAD-like hydrolase superfamily. MasA/MtnC family.</text>
</comment>
<organism>
    <name type="scientific">Saccharomyces cerevisiae (strain JAY291)</name>
    <name type="common">Baker's yeast</name>
    <dbReference type="NCBI Taxonomy" id="574961"/>
    <lineage>
        <taxon>Eukaryota</taxon>
        <taxon>Fungi</taxon>
        <taxon>Dikarya</taxon>
        <taxon>Ascomycota</taxon>
        <taxon>Saccharomycotina</taxon>
        <taxon>Saccharomycetes</taxon>
        <taxon>Saccharomycetales</taxon>
        <taxon>Saccharomycetaceae</taxon>
        <taxon>Saccharomyces</taxon>
    </lineage>
</organism>
<evidence type="ECO:0000255" key="1">
    <source>
        <dbReference type="HAMAP-Rule" id="MF_03117"/>
    </source>
</evidence>
<dbReference type="EC" id="3.1.3.77" evidence="1"/>
<dbReference type="EMBL" id="ACFL01000022">
    <property type="protein sequence ID" value="EEU08729.1"/>
    <property type="molecule type" value="Genomic_DNA"/>
</dbReference>
<dbReference type="SMR" id="C7GKE1"/>
<dbReference type="UniPathway" id="UPA00904">
    <property type="reaction ID" value="UER00876"/>
</dbReference>
<dbReference type="UniPathway" id="UPA00904">
    <property type="reaction ID" value="UER00877"/>
</dbReference>
<dbReference type="Proteomes" id="UP000008073">
    <property type="component" value="Unassembled WGS sequence"/>
</dbReference>
<dbReference type="GO" id="GO:0005737">
    <property type="term" value="C:cytoplasm"/>
    <property type="evidence" value="ECO:0007669"/>
    <property type="project" value="UniProtKB-SubCell"/>
</dbReference>
<dbReference type="GO" id="GO:0005634">
    <property type="term" value="C:nucleus"/>
    <property type="evidence" value="ECO:0007669"/>
    <property type="project" value="UniProtKB-SubCell"/>
</dbReference>
<dbReference type="GO" id="GO:0043874">
    <property type="term" value="F:acireductone synthase activity"/>
    <property type="evidence" value="ECO:0007669"/>
    <property type="project" value="UniProtKB-EC"/>
</dbReference>
<dbReference type="GO" id="GO:0000287">
    <property type="term" value="F:magnesium ion binding"/>
    <property type="evidence" value="ECO:0007669"/>
    <property type="project" value="UniProtKB-UniRule"/>
</dbReference>
<dbReference type="GO" id="GO:0019509">
    <property type="term" value="P:L-methionine salvage from methylthioadenosine"/>
    <property type="evidence" value="ECO:0007669"/>
    <property type="project" value="UniProtKB-UniRule"/>
</dbReference>
<dbReference type="CDD" id="cd01629">
    <property type="entry name" value="HAD_EP"/>
    <property type="match status" value="1"/>
</dbReference>
<dbReference type="FunFam" id="3.40.50.1000:FF:000079">
    <property type="entry name" value="Enolase-phosphatase E1"/>
    <property type="match status" value="1"/>
</dbReference>
<dbReference type="Gene3D" id="1.10.720.60">
    <property type="match status" value="1"/>
</dbReference>
<dbReference type="Gene3D" id="3.40.50.1000">
    <property type="entry name" value="HAD superfamily/HAD-like"/>
    <property type="match status" value="1"/>
</dbReference>
<dbReference type="HAMAP" id="MF_03117">
    <property type="entry name" value="Salvage_MtnC_euk"/>
    <property type="match status" value="1"/>
</dbReference>
<dbReference type="InterPro" id="IPR023943">
    <property type="entry name" value="Enolase-ppase_E1"/>
</dbReference>
<dbReference type="InterPro" id="IPR027511">
    <property type="entry name" value="ENOPH1_eukaryotes"/>
</dbReference>
<dbReference type="InterPro" id="IPR036412">
    <property type="entry name" value="HAD-like_sf"/>
</dbReference>
<dbReference type="InterPro" id="IPR023214">
    <property type="entry name" value="HAD_sf"/>
</dbReference>
<dbReference type="NCBIfam" id="TIGR01691">
    <property type="entry name" value="enolase-ppase"/>
    <property type="match status" value="1"/>
</dbReference>
<dbReference type="PANTHER" id="PTHR20371">
    <property type="entry name" value="ENOLASE-PHOSPHATASE E1"/>
    <property type="match status" value="1"/>
</dbReference>
<dbReference type="PANTHER" id="PTHR20371:SF1">
    <property type="entry name" value="ENOLASE-PHOSPHATASE E1"/>
    <property type="match status" value="1"/>
</dbReference>
<dbReference type="Pfam" id="PF00702">
    <property type="entry name" value="Hydrolase"/>
    <property type="match status" value="1"/>
</dbReference>
<dbReference type="SFLD" id="SFLDG01133">
    <property type="entry name" value="C1.5.4:_Enolase-phosphatase_Li"/>
    <property type="match status" value="1"/>
</dbReference>
<dbReference type="SFLD" id="SFLDS00003">
    <property type="entry name" value="Haloacid_Dehalogenase"/>
    <property type="match status" value="1"/>
</dbReference>
<dbReference type="SUPFAM" id="SSF56784">
    <property type="entry name" value="HAD-like"/>
    <property type="match status" value="1"/>
</dbReference>
<reference key="1">
    <citation type="journal article" date="2009" name="Genome Res.">
        <title>Genome structure of a Saccharomyces cerevisiae strain widely used in bioethanol production.</title>
        <authorList>
            <person name="Argueso J.L."/>
            <person name="Carazzolle M.F."/>
            <person name="Mieczkowski P.A."/>
            <person name="Duarte F.M."/>
            <person name="Netto O.V.C."/>
            <person name="Missawa S.K."/>
            <person name="Galzerani F."/>
            <person name="Costa G.G.L."/>
            <person name="Vidal R.O."/>
            <person name="Noronha M.F."/>
            <person name="Dominska M."/>
            <person name="Andrietta M.G.S."/>
            <person name="Andrietta S.R."/>
            <person name="Cunha A.F."/>
            <person name="Gomes L.H."/>
            <person name="Tavares F.C.A."/>
            <person name="Alcarde A.R."/>
            <person name="Dietrich F.S."/>
            <person name="McCusker J.H."/>
            <person name="Petes T.D."/>
            <person name="Pereira G.A.G."/>
        </authorList>
    </citation>
    <scope>NUCLEOTIDE SEQUENCE [LARGE SCALE GENOMIC DNA]</scope>
    <source>
        <strain>JAY291</strain>
    </source>
</reference>
<feature type="chain" id="PRO_0000394010" description="Enolase-phosphatase E1">
    <location>
        <begin position="1"/>
        <end position="227"/>
    </location>
</feature>
<feature type="binding site" evidence="1">
    <location>
        <position position="11"/>
    </location>
    <ligand>
        <name>Mg(2+)</name>
        <dbReference type="ChEBI" id="CHEBI:18420"/>
    </ligand>
</feature>
<feature type="binding site" evidence="1">
    <location>
        <position position="13"/>
    </location>
    <ligand>
        <name>Mg(2+)</name>
        <dbReference type="ChEBI" id="CHEBI:18420"/>
    </ligand>
</feature>
<feature type="binding site" evidence="1">
    <location>
        <begin position="118"/>
        <end position="119"/>
    </location>
    <ligand>
        <name>substrate</name>
    </ligand>
</feature>
<feature type="binding site" evidence="1">
    <location>
        <position position="161"/>
    </location>
    <ligand>
        <name>substrate</name>
    </ligand>
</feature>
<feature type="binding site" evidence="1">
    <location>
        <position position="186"/>
    </location>
    <ligand>
        <name>Mg(2+)</name>
        <dbReference type="ChEBI" id="CHEBI:18420"/>
    </ligand>
</feature>